<gene>
    <name type="ordered locus">MPN_195</name>
    <name type="ORF">GT9_orf434</name>
    <name type="ORF">MP636</name>
</gene>
<name>Y195_MYCPN</name>
<accession>Q50292</accession>
<protein>
    <recommendedName>
        <fullName>Uncharacterized protein MG181 homolog</fullName>
    </recommendedName>
</protein>
<reference key="1">
    <citation type="journal article" date="1996" name="Nucleic Acids Res.">
        <title>Sequence analysis of 56 kb from the genome of the bacterium Mycoplasma pneumoniae comprising the dnaA region, the atp operon and a cluster of ribosomal protein genes.</title>
        <authorList>
            <person name="Hilbert H."/>
            <person name="Himmelreich R."/>
            <person name="Plagens H."/>
            <person name="Herrmann R."/>
        </authorList>
    </citation>
    <scope>NUCLEOTIDE SEQUENCE [GENOMIC DNA]</scope>
    <source>
        <strain>ATCC 29342 / M129 / Subtype 1</strain>
    </source>
</reference>
<reference key="2">
    <citation type="journal article" date="1996" name="Nucleic Acids Res.">
        <title>Complete sequence analysis of the genome of the bacterium Mycoplasma pneumoniae.</title>
        <authorList>
            <person name="Himmelreich R."/>
            <person name="Hilbert H."/>
            <person name="Plagens H."/>
            <person name="Pirkl E."/>
            <person name="Li B.-C."/>
            <person name="Herrmann R."/>
        </authorList>
    </citation>
    <scope>NUCLEOTIDE SEQUENCE [LARGE SCALE GENOMIC DNA]</scope>
    <source>
        <strain>ATCC 29342 / M129 / Subtype 1</strain>
    </source>
</reference>
<feature type="chain" id="PRO_0000210449" description="Uncharacterized protein MG181 homolog">
    <location>
        <begin position="1"/>
        <end position="434"/>
    </location>
</feature>
<feature type="transmembrane region" description="Helical" evidence="1">
    <location>
        <begin position="27"/>
        <end position="47"/>
    </location>
</feature>
<feature type="transmembrane region" description="Helical" evidence="1">
    <location>
        <begin position="64"/>
        <end position="84"/>
    </location>
</feature>
<feature type="transmembrane region" description="Helical" evidence="1">
    <location>
        <begin position="244"/>
        <end position="264"/>
    </location>
</feature>
<feature type="transmembrane region" description="Helical" evidence="1">
    <location>
        <begin position="289"/>
        <end position="309"/>
    </location>
</feature>
<feature type="transmembrane region" description="Helical" evidence="1">
    <location>
        <begin position="387"/>
        <end position="407"/>
    </location>
</feature>
<comment type="subcellular location">
    <subcellularLocation>
        <location evidence="2">Cell membrane</location>
        <topology evidence="2">Multi-pass membrane protein</topology>
    </subcellularLocation>
</comment>
<comment type="similarity">
    <text evidence="2">Belongs to the CbiQ family.</text>
</comment>
<sequence>MDSFFINGYVPRDTFIHRLHPTTKLLIFLLFVILVFVPIGFVFQSVIFVFATVIFFVAKLPGRFYLSSIKSISLLFLLLLFVNWFTFRDPGFYITADQVNTVKPHFNGNNFNFWNISLFNYQDNVFSQVFNFNRANMTELNKINFFFKETANANAYTKVTGIDKLAEMLASKNLFKFNGSTNGIDKNKILGAFLDHKIAVYLGRSWGGDFSGFVIDVSVSDKTSTFTIKPFLANSNYVLTLRAIILAFYVTQKILIMIILATVLTSTSSSVELAYGIERLLWPLKLLRVPVNVFAMTIAIAIRFVPSLLLESQRILNAQASRGLDFKNGNFFVKMRSLSSLVVPMISIAFRNAGELASAMEARGYDPTKKRTTYRKFKIDWVDATALILTALYFVVIIFLTVKGAVFLDLGTPEWLLTGKIKEQVERSLSVKSA</sequence>
<proteinExistence type="inferred from homology"/>
<organism>
    <name type="scientific">Mycoplasma pneumoniae (strain ATCC 29342 / M129 / Subtype 1)</name>
    <name type="common">Mycoplasmoides pneumoniae</name>
    <dbReference type="NCBI Taxonomy" id="272634"/>
    <lineage>
        <taxon>Bacteria</taxon>
        <taxon>Bacillati</taxon>
        <taxon>Mycoplasmatota</taxon>
        <taxon>Mycoplasmoidales</taxon>
        <taxon>Mycoplasmoidaceae</taxon>
        <taxon>Mycoplasmoides</taxon>
    </lineage>
</organism>
<evidence type="ECO:0000255" key="1"/>
<evidence type="ECO:0000305" key="2"/>
<dbReference type="EMBL" id="U34795">
    <property type="protein sequence ID" value="AAC43686.1"/>
    <property type="molecule type" value="Genomic_DNA"/>
</dbReference>
<dbReference type="EMBL" id="U00089">
    <property type="protein sequence ID" value="AAB96284.1"/>
    <property type="molecule type" value="Genomic_DNA"/>
</dbReference>
<dbReference type="PIR" id="S62813">
    <property type="entry name" value="S62813"/>
</dbReference>
<dbReference type="RefSeq" id="NP_109883.1">
    <property type="nucleotide sequence ID" value="NC_000912.1"/>
</dbReference>
<dbReference type="RefSeq" id="WP_010874552.1">
    <property type="nucleotide sequence ID" value="NZ_OU342337.1"/>
</dbReference>
<dbReference type="SMR" id="Q50292"/>
<dbReference type="IntAct" id="Q50292">
    <property type="interactions" value="1"/>
</dbReference>
<dbReference type="STRING" id="272634.MPN_195"/>
<dbReference type="EnsemblBacteria" id="AAB96284">
    <property type="protein sequence ID" value="AAB96284"/>
    <property type="gene ID" value="MPN_195"/>
</dbReference>
<dbReference type="KEGG" id="mpn:MPN_195"/>
<dbReference type="PATRIC" id="fig|272634.6.peg.213"/>
<dbReference type="HOGENOM" id="CLU_056469_2_2_14"/>
<dbReference type="OrthoDB" id="8075495at2"/>
<dbReference type="BioCyc" id="MPNE272634:G1GJ3-312-MONOMER"/>
<dbReference type="Proteomes" id="UP000000808">
    <property type="component" value="Chromosome"/>
</dbReference>
<dbReference type="GO" id="GO:0005886">
    <property type="term" value="C:plasma membrane"/>
    <property type="evidence" value="ECO:0007669"/>
    <property type="project" value="UniProtKB-SubCell"/>
</dbReference>
<dbReference type="CDD" id="cd16914">
    <property type="entry name" value="EcfT"/>
    <property type="match status" value="1"/>
</dbReference>
<dbReference type="InterPro" id="IPR003339">
    <property type="entry name" value="ABC/ECF_trnsptr_transmembrane"/>
</dbReference>
<dbReference type="PANTHER" id="PTHR33514">
    <property type="entry name" value="PROTEIN ABCI12, CHLOROPLASTIC"/>
    <property type="match status" value="1"/>
</dbReference>
<dbReference type="PANTHER" id="PTHR33514:SF13">
    <property type="entry name" value="PROTEIN ABCI12, CHLOROPLASTIC"/>
    <property type="match status" value="1"/>
</dbReference>
<dbReference type="Pfam" id="PF02361">
    <property type="entry name" value="CbiQ"/>
    <property type="match status" value="2"/>
</dbReference>
<keyword id="KW-1003">Cell membrane</keyword>
<keyword id="KW-0472">Membrane</keyword>
<keyword id="KW-1185">Reference proteome</keyword>
<keyword id="KW-0812">Transmembrane</keyword>
<keyword id="KW-1133">Transmembrane helix</keyword>